<comment type="function">
    <text evidence="1">Reversibly transfers an adenylyl group from ATP to 4'-phosphopantetheine, yielding dephospho-CoA (dPCoA) and pyrophosphate.</text>
</comment>
<comment type="catalytic activity">
    <reaction evidence="1">
        <text>(R)-4'-phosphopantetheine + ATP + H(+) = 3'-dephospho-CoA + diphosphate</text>
        <dbReference type="Rhea" id="RHEA:19801"/>
        <dbReference type="ChEBI" id="CHEBI:15378"/>
        <dbReference type="ChEBI" id="CHEBI:30616"/>
        <dbReference type="ChEBI" id="CHEBI:33019"/>
        <dbReference type="ChEBI" id="CHEBI:57328"/>
        <dbReference type="ChEBI" id="CHEBI:61723"/>
        <dbReference type="EC" id="2.7.7.3"/>
    </reaction>
</comment>
<comment type="cofactor">
    <cofactor evidence="1">
        <name>Mg(2+)</name>
        <dbReference type="ChEBI" id="CHEBI:18420"/>
    </cofactor>
</comment>
<comment type="pathway">
    <text evidence="1">Cofactor biosynthesis; coenzyme A biosynthesis; CoA from (R)-pantothenate: step 4/5.</text>
</comment>
<comment type="subunit">
    <text evidence="1">Homohexamer.</text>
</comment>
<comment type="subcellular location">
    <subcellularLocation>
        <location evidence="1">Cytoplasm</location>
    </subcellularLocation>
</comment>
<comment type="similarity">
    <text evidence="1">Belongs to the bacterial CoaD family.</text>
</comment>
<gene>
    <name evidence="1" type="primary">coaD</name>
    <name type="ordered locus">lmo2052</name>
</gene>
<organism>
    <name type="scientific">Listeria monocytogenes serovar 1/2a (strain ATCC BAA-679 / EGD-e)</name>
    <dbReference type="NCBI Taxonomy" id="169963"/>
    <lineage>
        <taxon>Bacteria</taxon>
        <taxon>Bacillati</taxon>
        <taxon>Bacillota</taxon>
        <taxon>Bacilli</taxon>
        <taxon>Bacillales</taxon>
        <taxon>Listeriaceae</taxon>
        <taxon>Listeria</taxon>
    </lineage>
</organism>
<proteinExistence type="inferred from homology"/>
<accession>Q8Y5K7</accession>
<name>COAD_LISMO</name>
<keyword id="KW-0067">ATP-binding</keyword>
<keyword id="KW-0173">Coenzyme A biosynthesis</keyword>
<keyword id="KW-0963">Cytoplasm</keyword>
<keyword id="KW-0460">Magnesium</keyword>
<keyword id="KW-0547">Nucleotide-binding</keyword>
<keyword id="KW-0548">Nucleotidyltransferase</keyword>
<keyword id="KW-1185">Reference proteome</keyword>
<keyword id="KW-0808">Transferase</keyword>
<sequence>MGDKIAVIPGTFDPITNGHLDIIERAAKIFDVLYVSVLNNSSKKPLFTIEERMEMIRQVTAHLPNVQVESASGLTVDYAATRGATAIVRGLRAVSDFEYEMQIASMNRTLNADIETFFVMTNTKYSFLSSSMVKEVAQYQGDISELVPEIVNKAVQAKFK</sequence>
<protein>
    <recommendedName>
        <fullName evidence="1">Phosphopantetheine adenylyltransferase</fullName>
        <ecNumber evidence="1">2.7.7.3</ecNumber>
    </recommendedName>
    <alternativeName>
        <fullName evidence="1">Dephospho-CoA pyrophosphorylase</fullName>
    </alternativeName>
    <alternativeName>
        <fullName evidence="1">Pantetheine-phosphate adenylyltransferase</fullName>
        <shortName evidence="1">PPAT</shortName>
    </alternativeName>
</protein>
<reference key="1">
    <citation type="journal article" date="2001" name="Science">
        <title>Comparative genomics of Listeria species.</title>
        <authorList>
            <person name="Glaser P."/>
            <person name="Frangeul L."/>
            <person name="Buchrieser C."/>
            <person name="Rusniok C."/>
            <person name="Amend A."/>
            <person name="Baquero F."/>
            <person name="Berche P."/>
            <person name="Bloecker H."/>
            <person name="Brandt P."/>
            <person name="Chakraborty T."/>
            <person name="Charbit A."/>
            <person name="Chetouani F."/>
            <person name="Couve E."/>
            <person name="de Daruvar A."/>
            <person name="Dehoux P."/>
            <person name="Domann E."/>
            <person name="Dominguez-Bernal G."/>
            <person name="Duchaud E."/>
            <person name="Durant L."/>
            <person name="Dussurget O."/>
            <person name="Entian K.-D."/>
            <person name="Fsihi H."/>
            <person name="Garcia-del Portillo F."/>
            <person name="Garrido P."/>
            <person name="Gautier L."/>
            <person name="Goebel W."/>
            <person name="Gomez-Lopez N."/>
            <person name="Hain T."/>
            <person name="Hauf J."/>
            <person name="Jackson D."/>
            <person name="Jones L.-M."/>
            <person name="Kaerst U."/>
            <person name="Kreft J."/>
            <person name="Kuhn M."/>
            <person name="Kunst F."/>
            <person name="Kurapkat G."/>
            <person name="Madueno E."/>
            <person name="Maitournam A."/>
            <person name="Mata Vicente J."/>
            <person name="Ng E."/>
            <person name="Nedjari H."/>
            <person name="Nordsiek G."/>
            <person name="Novella S."/>
            <person name="de Pablos B."/>
            <person name="Perez-Diaz J.-C."/>
            <person name="Purcell R."/>
            <person name="Remmel B."/>
            <person name="Rose M."/>
            <person name="Schlueter T."/>
            <person name="Simoes N."/>
            <person name="Tierrez A."/>
            <person name="Vazquez-Boland J.-A."/>
            <person name="Voss H."/>
            <person name="Wehland J."/>
            <person name="Cossart P."/>
        </authorList>
    </citation>
    <scope>NUCLEOTIDE SEQUENCE [LARGE SCALE GENOMIC DNA]</scope>
    <source>
        <strain>ATCC BAA-679 / EGD-e</strain>
    </source>
</reference>
<feature type="chain" id="PRO_0000156232" description="Phosphopantetheine adenylyltransferase">
    <location>
        <begin position="1"/>
        <end position="160"/>
    </location>
</feature>
<feature type="binding site" evidence="1">
    <location>
        <begin position="11"/>
        <end position="12"/>
    </location>
    <ligand>
        <name>ATP</name>
        <dbReference type="ChEBI" id="CHEBI:30616"/>
    </ligand>
</feature>
<feature type="binding site" evidence="1">
    <location>
        <position position="11"/>
    </location>
    <ligand>
        <name>substrate</name>
    </ligand>
</feature>
<feature type="binding site" evidence="1">
    <location>
        <position position="19"/>
    </location>
    <ligand>
        <name>ATP</name>
        <dbReference type="ChEBI" id="CHEBI:30616"/>
    </ligand>
</feature>
<feature type="binding site" evidence="1">
    <location>
        <position position="43"/>
    </location>
    <ligand>
        <name>substrate</name>
    </ligand>
</feature>
<feature type="binding site" evidence="1">
    <location>
        <position position="75"/>
    </location>
    <ligand>
        <name>substrate</name>
    </ligand>
</feature>
<feature type="binding site" evidence="1">
    <location>
        <position position="89"/>
    </location>
    <ligand>
        <name>substrate</name>
    </ligand>
</feature>
<feature type="binding site" evidence="1">
    <location>
        <begin position="90"/>
        <end position="92"/>
    </location>
    <ligand>
        <name>ATP</name>
        <dbReference type="ChEBI" id="CHEBI:30616"/>
    </ligand>
</feature>
<feature type="binding site" evidence="1">
    <location>
        <position position="100"/>
    </location>
    <ligand>
        <name>ATP</name>
        <dbReference type="ChEBI" id="CHEBI:30616"/>
    </ligand>
</feature>
<feature type="binding site" evidence="1">
    <location>
        <begin position="125"/>
        <end position="131"/>
    </location>
    <ligand>
        <name>ATP</name>
        <dbReference type="ChEBI" id="CHEBI:30616"/>
    </ligand>
</feature>
<feature type="site" description="Transition state stabilizer" evidence="1">
    <location>
        <position position="19"/>
    </location>
</feature>
<dbReference type="EC" id="2.7.7.3" evidence="1"/>
<dbReference type="EMBL" id="AL591982">
    <property type="protein sequence ID" value="CAD00130.1"/>
    <property type="molecule type" value="Genomic_DNA"/>
</dbReference>
<dbReference type="PIR" id="AD1331">
    <property type="entry name" value="AD1331"/>
</dbReference>
<dbReference type="RefSeq" id="NP_465576.1">
    <property type="nucleotide sequence ID" value="NC_003210.1"/>
</dbReference>
<dbReference type="RefSeq" id="WP_003728846.1">
    <property type="nucleotide sequence ID" value="NZ_CP149495.1"/>
</dbReference>
<dbReference type="SMR" id="Q8Y5K7"/>
<dbReference type="STRING" id="169963.gene:17594737"/>
<dbReference type="PaxDb" id="169963-lmo2052"/>
<dbReference type="EnsemblBacteria" id="CAD00130">
    <property type="protein sequence ID" value="CAD00130"/>
    <property type="gene ID" value="CAD00130"/>
</dbReference>
<dbReference type="GeneID" id="987934"/>
<dbReference type="KEGG" id="lmo:lmo2052"/>
<dbReference type="PATRIC" id="fig|169963.11.peg.2100"/>
<dbReference type="eggNOG" id="COG0669">
    <property type="taxonomic scope" value="Bacteria"/>
</dbReference>
<dbReference type="HOGENOM" id="CLU_100149_0_1_9"/>
<dbReference type="OrthoDB" id="9806661at2"/>
<dbReference type="PhylomeDB" id="Q8Y5K7"/>
<dbReference type="BioCyc" id="LMON169963:LMO2052-MONOMER"/>
<dbReference type="UniPathway" id="UPA00241">
    <property type="reaction ID" value="UER00355"/>
</dbReference>
<dbReference type="Proteomes" id="UP000000817">
    <property type="component" value="Chromosome"/>
</dbReference>
<dbReference type="GO" id="GO:0005737">
    <property type="term" value="C:cytoplasm"/>
    <property type="evidence" value="ECO:0007669"/>
    <property type="project" value="UniProtKB-SubCell"/>
</dbReference>
<dbReference type="GO" id="GO:0005524">
    <property type="term" value="F:ATP binding"/>
    <property type="evidence" value="ECO:0007669"/>
    <property type="project" value="UniProtKB-KW"/>
</dbReference>
<dbReference type="GO" id="GO:0004595">
    <property type="term" value="F:pantetheine-phosphate adenylyltransferase activity"/>
    <property type="evidence" value="ECO:0000318"/>
    <property type="project" value="GO_Central"/>
</dbReference>
<dbReference type="GO" id="GO:0015937">
    <property type="term" value="P:coenzyme A biosynthetic process"/>
    <property type="evidence" value="ECO:0000318"/>
    <property type="project" value="GO_Central"/>
</dbReference>
<dbReference type="CDD" id="cd02163">
    <property type="entry name" value="PPAT"/>
    <property type="match status" value="1"/>
</dbReference>
<dbReference type="FunFam" id="3.40.50.620:FF:000012">
    <property type="entry name" value="Phosphopantetheine adenylyltransferase"/>
    <property type="match status" value="1"/>
</dbReference>
<dbReference type="Gene3D" id="3.40.50.620">
    <property type="entry name" value="HUPs"/>
    <property type="match status" value="1"/>
</dbReference>
<dbReference type="HAMAP" id="MF_00151">
    <property type="entry name" value="PPAT_bact"/>
    <property type="match status" value="1"/>
</dbReference>
<dbReference type="InterPro" id="IPR004821">
    <property type="entry name" value="Cyt_trans-like"/>
</dbReference>
<dbReference type="InterPro" id="IPR001980">
    <property type="entry name" value="PPAT"/>
</dbReference>
<dbReference type="InterPro" id="IPR014729">
    <property type="entry name" value="Rossmann-like_a/b/a_fold"/>
</dbReference>
<dbReference type="NCBIfam" id="TIGR01510">
    <property type="entry name" value="coaD_prev_kdtB"/>
    <property type="match status" value="1"/>
</dbReference>
<dbReference type="NCBIfam" id="TIGR00125">
    <property type="entry name" value="cyt_tran_rel"/>
    <property type="match status" value="1"/>
</dbReference>
<dbReference type="PANTHER" id="PTHR21342">
    <property type="entry name" value="PHOSPHOPANTETHEINE ADENYLYLTRANSFERASE"/>
    <property type="match status" value="1"/>
</dbReference>
<dbReference type="PANTHER" id="PTHR21342:SF1">
    <property type="entry name" value="PHOSPHOPANTETHEINE ADENYLYLTRANSFERASE"/>
    <property type="match status" value="1"/>
</dbReference>
<dbReference type="Pfam" id="PF01467">
    <property type="entry name" value="CTP_transf_like"/>
    <property type="match status" value="1"/>
</dbReference>
<dbReference type="PRINTS" id="PR01020">
    <property type="entry name" value="LPSBIOSNTHSS"/>
</dbReference>
<dbReference type="SUPFAM" id="SSF52374">
    <property type="entry name" value="Nucleotidylyl transferase"/>
    <property type="match status" value="1"/>
</dbReference>
<evidence type="ECO:0000255" key="1">
    <source>
        <dbReference type="HAMAP-Rule" id="MF_00151"/>
    </source>
</evidence>